<gene>
    <name evidence="1" type="primary">rpsP</name>
    <name type="ordered locus">RPA0244</name>
</gene>
<accession>P62236</accession>
<name>RS16_RHOPA</name>
<reference key="1">
    <citation type="journal article" date="2004" name="Nat. Biotechnol.">
        <title>Complete genome sequence of the metabolically versatile photosynthetic bacterium Rhodopseudomonas palustris.</title>
        <authorList>
            <person name="Larimer F.W."/>
            <person name="Chain P."/>
            <person name="Hauser L."/>
            <person name="Lamerdin J.E."/>
            <person name="Malfatti S."/>
            <person name="Do L."/>
            <person name="Land M.L."/>
            <person name="Pelletier D.A."/>
            <person name="Beatty J.T."/>
            <person name="Lang A.S."/>
            <person name="Tabita F.R."/>
            <person name="Gibson J.L."/>
            <person name="Hanson T.E."/>
            <person name="Bobst C."/>
            <person name="Torres y Torres J.L."/>
            <person name="Peres C."/>
            <person name="Harrison F.H."/>
            <person name="Gibson J."/>
            <person name="Harwood C.S."/>
        </authorList>
    </citation>
    <scope>NUCLEOTIDE SEQUENCE [LARGE SCALE GENOMIC DNA]</scope>
    <source>
        <strain>ATCC BAA-98 / CGA009</strain>
    </source>
</reference>
<reference key="2">
    <citation type="journal article" date="2004" name="J. Proteome Res.">
        <title>Characterization of the 70S ribosome from Rhodopseudomonas palustris using an integrated 'top-down' and 'bottom-up' mass spectrometric approach.</title>
        <authorList>
            <person name="Strader M.B."/>
            <person name="VerBerkmoes N.C."/>
            <person name="Tabb D.L."/>
            <person name="Connelly H.M."/>
            <person name="Barton J.W."/>
            <person name="Bruce B.D."/>
            <person name="Pelletier D.A."/>
            <person name="Davison B.H."/>
            <person name="Hettich R.L."/>
            <person name="Larimer F.W."/>
            <person name="Hurst G.B."/>
        </authorList>
    </citation>
    <scope>MASS SPECTROMETRY</scope>
    <source>
        <strain>ATCC BAA-98 / CGA009</strain>
    </source>
</reference>
<evidence type="ECO:0000255" key="1">
    <source>
        <dbReference type="HAMAP-Rule" id="MF_00385"/>
    </source>
</evidence>
<evidence type="ECO:0000256" key="2">
    <source>
        <dbReference type="SAM" id="MobiDB-lite"/>
    </source>
</evidence>
<evidence type="ECO:0000269" key="3">
    <source>
    </source>
</evidence>
<evidence type="ECO:0000305" key="4"/>
<protein>
    <recommendedName>
        <fullName evidence="1">Small ribosomal subunit protein bS16</fullName>
    </recommendedName>
    <alternativeName>
        <fullName evidence="4">30S ribosomal protein S16</fullName>
    </alternativeName>
    <alternativeName>
        <fullName>RRP-S16</fullName>
    </alternativeName>
</protein>
<keyword id="KW-0687">Ribonucleoprotein</keyword>
<keyword id="KW-0689">Ribosomal protein</keyword>
<feature type="initiator methionine" description="Removed">
    <location>
        <position position="1"/>
    </location>
</feature>
<feature type="chain" id="PRO_0000167233" description="Small ribosomal subunit protein bS16">
    <location>
        <begin position="2"/>
        <end position="106"/>
    </location>
</feature>
<feature type="region of interest" description="Disordered" evidence="2">
    <location>
        <begin position="84"/>
        <end position="106"/>
    </location>
</feature>
<comment type="mass spectrometry"/>
<comment type="similarity">
    <text evidence="1">Belongs to the bacterial ribosomal protein bS16 family.</text>
</comment>
<dbReference type="EMBL" id="BX572593">
    <property type="protein sequence ID" value="CAE25688.1"/>
    <property type="molecule type" value="Genomic_DNA"/>
</dbReference>
<dbReference type="RefSeq" id="WP_011155812.1">
    <property type="nucleotide sequence ID" value="NZ_CP116810.1"/>
</dbReference>
<dbReference type="SMR" id="P62236"/>
<dbReference type="IntAct" id="P62236">
    <property type="interactions" value="1"/>
</dbReference>
<dbReference type="STRING" id="258594.RPA0244"/>
<dbReference type="GeneID" id="66891251"/>
<dbReference type="eggNOG" id="COG0228">
    <property type="taxonomic scope" value="Bacteria"/>
</dbReference>
<dbReference type="HOGENOM" id="CLU_100590_3_1_5"/>
<dbReference type="PhylomeDB" id="P62236"/>
<dbReference type="GO" id="GO:0005737">
    <property type="term" value="C:cytoplasm"/>
    <property type="evidence" value="ECO:0007669"/>
    <property type="project" value="UniProtKB-ARBA"/>
</dbReference>
<dbReference type="GO" id="GO:0015935">
    <property type="term" value="C:small ribosomal subunit"/>
    <property type="evidence" value="ECO:0007669"/>
    <property type="project" value="TreeGrafter"/>
</dbReference>
<dbReference type="GO" id="GO:0003735">
    <property type="term" value="F:structural constituent of ribosome"/>
    <property type="evidence" value="ECO:0007669"/>
    <property type="project" value="InterPro"/>
</dbReference>
<dbReference type="GO" id="GO:0006412">
    <property type="term" value="P:translation"/>
    <property type="evidence" value="ECO:0007669"/>
    <property type="project" value="UniProtKB-UniRule"/>
</dbReference>
<dbReference type="FunFam" id="3.30.1320.10:FF:000008">
    <property type="entry name" value="30S ribosomal protein S16"/>
    <property type="match status" value="1"/>
</dbReference>
<dbReference type="Gene3D" id="3.30.1320.10">
    <property type="match status" value="1"/>
</dbReference>
<dbReference type="HAMAP" id="MF_00385">
    <property type="entry name" value="Ribosomal_bS16"/>
    <property type="match status" value="1"/>
</dbReference>
<dbReference type="InterPro" id="IPR000307">
    <property type="entry name" value="Ribosomal_bS16"/>
</dbReference>
<dbReference type="InterPro" id="IPR023803">
    <property type="entry name" value="Ribosomal_bS16_dom_sf"/>
</dbReference>
<dbReference type="NCBIfam" id="TIGR00002">
    <property type="entry name" value="S16"/>
    <property type="match status" value="1"/>
</dbReference>
<dbReference type="PANTHER" id="PTHR12919">
    <property type="entry name" value="30S RIBOSOMAL PROTEIN S16"/>
    <property type="match status" value="1"/>
</dbReference>
<dbReference type="PANTHER" id="PTHR12919:SF20">
    <property type="entry name" value="SMALL RIBOSOMAL SUBUNIT PROTEIN BS16M"/>
    <property type="match status" value="1"/>
</dbReference>
<dbReference type="Pfam" id="PF00886">
    <property type="entry name" value="Ribosomal_S16"/>
    <property type="match status" value="1"/>
</dbReference>
<dbReference type="SUPFAM" id="SSF54565">
    <property type="entry name" value="Ribosomal protein S16"/>
    <property type="match status" value="1"/>
</dbReference>
<sequence>MSVVIRLARAGTKKRPFYHVVVADSRFPRDGRFIERLGYFNPLMAKDNEARLKLDLDKVKDWLAKGAQPSDRVARFLDTAGVRKREARNNPEKAVPRKERKAADGK</sequence>
<organism>
    <name type="scientific">Rhodopseudomonas palustris (strain ATCC BAA-98 / CGA009)</name>
    <dbReference type="NCBI Taxonomy" id="258594"/>
    <lineage>
        <taxon>Bacteria</taxon>
        <taxon>Pseudomonadati</taxon>
        <taxon>Pseudomonadota</taxon>
        <taxon>Alphaproteobacteria</taxon>
        <taxon>Hyphomicrobiales</taxon>
        <taxon>Nitrobacteraceae</taxon>
        <taxon>Rhodopseudomonas</taxon>
    </lineage>
</organism>
<proteinExistence type="evidence at protein level"/>